<accession>Q9H7X7</accession>
<accession>Q49AG1</accession>
<accession>Q69YV5</accession>
<accession>Q9BSW4</accession>
<dbReference type="EMBL" id="AK023287">
    <property type="protein sequence ID" value="BAG51181.1"/>
    <property type="molecule type" value="mRNA"/>
</dbReference>
<dbReference type="EMBL" id="AK024179">
    <property type="protein sequence ID" value="BAB14846.1"/>
    <property type="molecule type" value="mRNA"/>
</dbReference>
<dbReference type="EMBL" id="AK298888">
    <property type="protein sequence ID" value="BAH12896.1"/>
    <property type="molecule type" value="mRNA"/>
</dbReference>
<dbReference type="EMBL" id="AC006329">
    <property type="status" value="NOT_ANNOTATED_CDS"/>
    <property type="molecule type" value="Genomic_DNA"/>
</dbReference>
<dbReference type="EMBL" id="CH471197">
    <property type="protein sequence ID" value="EAW50217.1"/>
    <property type="molecule type" value="Genomic_DNA"/>
</dbReference>
<dbReference type="EMBL" id="BC004522">
    <property type="protein sequence ID" value="AAH04522.1"/>
    <property type="molecule type" value="mRNA"/>
</dbReference>
<dbReference type="EMBL" id="BC009823">
    <property type="protein sequence ID" value="AAH09823.1"/>
    <property type="molecule type" value="mRNA"/>
</dbReference>
<dbReference type="EMBL" id="BC038668">
    <property type="protein sequence ID" value="AAH38668.1"/>
    <property type="molecule type" value="mRNA"/>
</dbReference>
<dbReference type="EMBL" id="AL157469">
    <property type="protein sequence ID" value="CAH10693.1"/>
    <property type="molecule type" value="mRNA"/>
</dbReference>
<dbReference type="CCDS" id="CCDS47670.1">
    <molecule id="Q9H7X7-2"/>
</dbReference>
<dbReference type="CCDS" id="CCDS47671.1">
    <molecule id="Q9H7X7-3"/>
</dbReference>
<dbReference type="CCDS" id="CCDS5719.1">
    <molecule id="Q9H7X7-1"/>
</dbReference>
<dbReference type="RefSeq" id="NP_001124292.1">
    <molecule id="Q9H7X7-2"/>
    <property type="nucleotide sequence ID" value="NM_001130820.3"/>
</dbReference>
<dbReference type="RefSeq" id="NP_001124293.1">
    <molecule id="Q9H7X7-3"/>
    <property type="nucleotide sequence ID" value="NM_001130821.3"/>
</dbReference>
<dbReference type="RefSeq" id="NP_001124294.1">
    <molecule id="Q9H7X7-3"/>
    <property type="nucleotide sequence ID" value="NM_001130822.3"/>
</dbReference>
<dbReference type="RefSeq" id="NP_001274454.1">
    <molecule id="Q9H7X7-3"/>
    <property type="nucleotide sequence ID" value="NM_001287525.2"/>
</dbReference>
<dbReference type="RefSeq" id="NP_001274455.1">
    <molecule id="Q9H7X7-3"/>
    <property type="nucleotide sequence ID" value="NM_001287526.1"/>
</dbReference>
<dbReference type="RefSeq" id="NP_073614.1">
    <molecule id="Q9H7X7-1"/>
    <property type="nucleotide sequence ID" value="NM_022777.4"/>
</dbReference>
<dbReference type="SMR" id="Q9H7X7"/>
<dbReference type="BioGRID" id="122300">
    <property type="interactions" value="51"/>
</dbReference>
<dbReference type="ComplexPortal" id="CPX-5022">
    <property type="entry name" value="Intraflagellar transport complex B"/>
</dbReference>
<dbReference type="CORUM" id="Q9H7X7"/>
<dbReference type="FunCoup" id="Q9H7X7">
    <property type="interactions" value="433"/>
</dbReference>
<dbReference type="IntAct" id="Q9H7X7">
    <property type="interactions" value="44"/>
</dbReference>
<dbReference type="STRING" id="9606.ENSP00000320359"/>
<dbReference type="iPTMnet" id="Q9H7X7"/>
<dbReference type="PhosphoSitePlus" id="Q9H7X7"/>
<dbReference type="BioMuta" id="IFT22"/>
<dbReference type="DMDM" id="74733725"/>
<dbReference type="jPOST" id="Q9H7X7"/>
<dbReference type="MassIVE" id="Q9H7X7"/>
<dbReference type="PaxDb" id="9606-ENSP00000320359"/>
<dbReference type="PeptideAtlas" id="Q9H7X7"/>
<dbReference type="ProteomicsDB" id="62041"/>
<dbReference type="ProteomicsDB" id="81155">
    <molecule id="Q9H7X7-1"/>
</dbReference>
<dbReference type="ProteomicsDB" id="81156">
    <molecule id="Q9H7X7-2"/>
</dbReference>
<dbReference type="Pumba" id="Q9H7X7"/>
<dbReference type="Antibodypedia" id="31006">
    <property type="antibodies" value="66 antibodies from 18 providers"/>
</dbReference>
<dbReference type="DNASU" id="64792"/>
<dbReference type="Ensembl" id="ENST00000315322.10">
    <molecule id="Q9H7X7-1"/>
    <property type="protein sequence ID" value="ENSP00000320359.4"/>
    <property type="gene ID" value="ENSG00000128581.17"/>
</dbReference>
<dbReference type="Ensembl" id="ENST00000422177.5">
    <molecule id="Q9H7X7-1"/>
    <property type="protein sequence ID" value="ENSP00000392087.1"/>
    <property type="gene ID" value="ENSG00000128581.17"/>
</dbReference>
<dbReference type="Ensembl" id="ENST00000437644.2">
    <molecule id="Q9H7X7-2"/>
    <property type="protein sequence ID" value="ENSP00000390770.2"/>
    <property type="gene ID" value="ENSG00000128581.17"/>
</dbReference>
<dbReference type="Ensembl" id="ENST00000498704.6">
    <molecule id="Q9H7X7-3"/>
    <property type="protein sequence ID" value="ENSP00000429648.1"/>
    <property type="gene ID" value="ENSG00000128581.17"/>
</dbReference>
<dbReference type="Ensembl" id="ENST00000517481.5">
    <molecule id="Q9H7X7-3"/>
    <property type="protein sequence ID" value="ENSP00000429202.1"/>
    <property type="gene ID" value="ENSG00000128581.17"/>
</dbReference>
<dbReference type="Ensembl" id="ENST00000621899.4">
    <molecule id="Q9H7X7-3"/>
    <property type="protein sequence ID" value="ENSP00000478948.1"/>
    <property type="gene ID" value="ENSG00000128581.17"/>
</dbReference>
<dbReference type="GeneID" id="64792"/>
<dbReference type="KEGG" id="hsa:64792"/>
<dbReference type="MANE-Select" id="ENST00000315322.10">
    <property type="protein sequence ID" value="ENSP00000320359.4"/>
    <property type="RefSeq nucleotide sequence ID" value="NM_022777.4"/>
    <property type="RefSeq protein sequence ID" value="NP_073614.1"/>
</dbReference>
<dbReference type="UCSC" id="uc003uyl.5">
    <molecule id="Q9H7X7-1"/>
    <property type="organism name" value="human"/>
</dbReference>
<dbReference type="AGR" id="HGNC:21895"/>
<dbReference type="CTD" id="64792"/>
<dbReference type="DisGeNET" id="64792"/>
<dbReference type="GeneCards" id="IFT22"/>
<dbReference type="HGNC" id="HGNC:21895">
    <property type="gene designation" value="IFT22"/>
</dbReference>
<dbReference type="HPA" id="ENSG00000128581">
    <property type="expression patterns" value="Low tissue specificity"/>
</dbReference>
<dbReference type="MIM" id="620505">
    <property type="type" value="gene"/>
</dbReference>
<dbReference type="neXtProt" id="NX_Q9H7X7"/>
<dbReference type="OpenTargets" id="ENSG00000128581"/>
<dbReference type="PharmGKB" id="PA134871769"/>
<dbReference type="VEuPathDB" id="HostDB:ENSG00000128581"/>
<dbReference type="eggNOG" id="ENOG502RXD4">
    <property type="taxonomic scope" value="Eukaryota"/>
</dbReference>
<dbReference type="GeneTree" id="ENSGT00390000013187"/>
<dbReference type="HOGENOM" id="CLU_2195962_0_0_1"/>
<dbReference type="InParanoid" id="Q9H7X7"/>
<dbReference type="OMA" id="NERHDQE"/>
<dbReference type="OrthoDB" id="275177at2759"/>
<dbReference type="PAN-GO" id="Q9H7X7">
    <property type="GO annotations" value="3 GO annotations based on evolutionary models"/>
</dbReference>
<dbReference type="PhylomeDB" id="Q9H7X7"/>
<dbReference type="TreeFam" id="TF313208"/>
<dbReference type="PathwayCommons" id="Q9H7X7"/>
<dbReference type="Reactome" id="R-HSA-5620924">
    <property type="pathway name" value="Intraflagellar transport"/>
</dbReference>
<dbReference type="SignaLink" id="Q9H7X7"/>
<dbReference type="BioGRID-ORCS" id="64792">
    <property type="hits" value="13 hits in 1154 CRISPR screens"/>
</dbReference>
<dbReference type="ChiTaRS" id="IFT22">
    <property type="organism name" value="human"/>
</dbReference>
<dbReference type="GenomeRNAi" id="64792"/>
<dbReference type="Pharos" id="Q9H7X7">
    <property type="development level" value="Tbio"/>
</dbReference>
<dbReference type="PRO" id="PR:Q9H7X7"/>
<dbReference type="Proteomes" id="UP000005640">
    <property type="component" value="Chromosome 7"/>
</dbReference>
<dbReference type="RNAct" id="Q9H7X7">
    <property type="molecule type" value="protein"/>
</dbReference>
<dbReference type="Bgee" id="ENSG00000128581">
    <property type="expression patterns" value="Expressed in bronchial epithelial cell and 192 other cell types or tissues"/>
</dbReference>
<dbReference type="ExpressionAtlas" id="Q9H7X7">
    <property type="expression patterns" value="baseline and differential"/>
</dbReference>
<dbReference type="GO" id="GO:0005813">
    <property type="term" value="C:centrosome"/>
    <property type="evidence" value="ECO:0007669"/>
    <property type="project" value="Ensembl"/>
</dbReference>
<dbReference type="GO" id="GO:0097542">
    <property type="term" value="C:ciliary tip"/>
    <property type="evidence" value="ECO:0000304"/>
    <property type="project" value="Reactome"/>
</dbReference>
<dbReference type="GO" id="GO:0005929">
    <property type="term" value="C:cilium"/>
    <property type="evidence" value="ECO:0000304"/>
    <property type="project" value="Reactome"/>
</dbReference>
<dbReference type="GO" id="GO:0012505">
    <property type="term" value="C:endomembrane system"/>
    <property type="evidence" value="ECO:0000318"/>
    <property type="project" value="GO_Central"/>
</dbReference>
<dbReference type="GO" id="GO:0030992">
    <property type="term" value="C:intraciliary transport particle B"/>
    <property type="evidence" value="ECO:0000353"/>
    <property type="project" value="ComplexPortal"/>
</dbReference>
<dbReference type="GO" id="GO:0005525">
    <property type="term" value="F:GTP binding"/>
    <property type="evidence" value="ECO:0007669"/>
    <property type="project" value="UniProtKB-KW"/>
</dbReference>
<dbReference type="GO" id="GO:0003924">
    <property type="term" value="F:GTPase activity"/>
    <property type="evidence" value="ECO:0000318"/>
    <property type="project" value="GO_Central"/>
</dbReference>
<dbReference type="GO" id="GO:0060271">
    <property type="term" value="P:cilium assembly"/>
    <property type="evidence" value="ECO:0000303"/>
    <property type="project" value="ComplexPortal"/>
</dbReference>
<dbReference type="GO" id="GO:0006886">
    <property type="term" value="P:intracellular protein transport"/>
    <property type="evidence" value="ECO:0000318"/>
    <property type="project" value="GO_Central"/>
</dbReference>
<dbReference type="GO" id="GO:0035720">
    <property type="term" value="P:intraciliary anterograde transport"/>
    <property type="evidence" value="ECO:0000303"/>
    <property type="project" value="ComplexPortal"/>
</dbReference>
<dbReference type="FunFam" id="3.40.50.300:FF:001100">
    <property type="entry name" value="intraflagellar transport protein 22 homolog"/>
    <property type="match status" value="1"/>
</dbReference>
<dbReference type="Gene3D" id="3.40.50.300">
    <property type="entry name" value="P-loop containing nucleotide triphosphate hydrolases"/>
    <property type="match status" value="1"/>
</dbReference>
<dbReference type="InterPro" id="IPR027417">
    <property type="entry name" value="P-loop_NTPase"/>
</dbReference>
<dbReference type="PANTHER" id="PTHR24073">
    <property type="entry name" value="DRAB5-RELATED"/>
    <property type="match status" value="1"/>
</dbReference>
<dbReference type="Pfam" id="PF08477">
    <property type="entry name" value="Roc"/>
    <property type="match status" value="1"/>
</dbReference>
<dbReference type="SUPFAM" id="SSF52540">
    <property type="entry name" value="P-loop containing nucleoside triphosphate hydrolases"/>
    <property type="match status" value="1"/>
</dbReference>
<reference key="1">
    <citation type="journal article" date="2004" name="Nat. Genet.">
        <title>Complete sequencing and characterization of 21,243 full-length human cDNAs.</title>
        <authorList>
            <person name="Ota T."/>
            <person name="Suzuki Y."/>
            <person name="Nishikawa T."/>
            <person name="Otsuki T."/>
            <person name="Sugiyama T."/>
            <person name="Irie R."/>
            <person name="Wakamatsu A."/>
            <person name="Hayashi K."/>
            <person name="Sato H."/>
            <person name="Nagai K."/>
            <person name="Kimura K."/>
            <person name="Makita H."/>
            <person name="Sekine M."/>
            <person name="Obayashi M."/>
            <person name="Nishi T."/>
            <person name="Shibahara T."/>
            <person name="Tanaka T."/>
            <person name="Ishii S."/>
            <person name="Yamamoto J."/>
            <person name="Saito K."/>
            <person name="Kawai Y."/>
            <person name="Isono Y."/>
            <person name="Nakamura Y."/>
            <person name="Nagahari K."/>
            <person name="Murakami K."/>
            <person name="Yasuda T."/>
            <person name="Iwayanagi T."/>
            <person name="Wagatsuma M."/>
            <person name="Shiratori A."/>
            <person name="Sudo H."/>
            <person name="Hosoiri T."/>
            <person name="Kaku Y."/>
            <person name="Kodaira H."/>
            <person name="Kondo H."/>
            <person name="Sugawara M."/>
            <person name="Takahashi M."/>
            <person name="Kanda K."/>
            <person name="Yokoi T."/>
            <person name="Furuya T."/>
            <person name="Kikkawa E."/>
            <person name="Omura Y."/>
            <person name="Abe K."/>
            <person name="Kamihara K."/>
            <person name="Katsuta N."/>
            <person name="Sato K."/>
            <person name="Tanikawa M."/>
            <person name="Yamazaki M."/>
            <person name="Ninomiya K."/>
            <person name="Ishibashi T."/>
            <person name="Yamashita H."/>
            <person name="Murakawa K."/>
            <person name="Fujimori K."/>
            <person name="Tanai H."/>
            <person name="Kimata M."/>
            <person name="Watanabe M."/>
            <person name="Hiraoka S."/>
            <person name="Chiba Y."/>
            <person name="Ishida S."/>
            <person name="Ono Y."/>
            <person name="Takiguchi S."/>
            <person name="Watanabe S."/>
            <person name="Yosida M."/>
            <person name="Hotuta T."/>
            <person name="Kusano J."/>
            <person name="Kanehori K."/>
            <person name="Takahashi-Fujii A."/>
            <person name="Hara H."/>
            <person name="Tanase T.-O."/>
            <person name="Nomura Y."/>
            <person name="Togiya S."/>
            <person name="Komai F."/>
            <person name="Hara R."/>
            <person name="Takeuchi K."/>
            <person name="Arita M."/>
            <person name="Imose N."/>
            <person name="Musashino K."/>
            <person name="Yuuki H."/>
            <person name="Oshima A."/>
            <person name="Sasaki N."/>
            <person name="Aotsuka S."/>
            <person name="Yoshikawa Y."/>
            <person name="Matsunawa H."/>
            <person name="Ichihara T."/>
            <person name="Shiohata N."/>
            <person name="Sano S."/>
            <person name="Moriya S."/>
            <person name="Momiyama H."/>
            <person name="Satoh N."/>
            <person name="Takami S."/>
            <person name="Terashima Y."/>
            <person name="Suzuki O."/>
            <person name="Nakagawa S."/>
            <person name="Senoh A."/>
            <person name="Mizoguchi H."/>
            <person name="Goto Y."/>
            <person name="Shimizu F."/>
            <person name="Wakebe H."/>
            <person name="Hishigaki H."/>
            <person name="Watanabe T."/>
            <person name="Sugiyama A."/>
            <person name="Takemoto M."/>
            <person name="Kawakami B."/>
            <person name="Yamazaki M."/>
            <person name="Watanabe K."/>
            <person name="Kumagai A."/>
            <person name="Itakura S."/>
            <person name="Fukuzumi Y."/>
            <person name="Fujimori Y."/>
            <person name="Komiyama M."/>
            <person name="Tashiro H."/>
            <person name="Tanigami A."/>
            <person name="Fujiwara T."/>
            <person name="Ono T."/>
            <person name="Yamada K."/>
            <person name="Fujii Y."/>
            <person name="Ozaki K."/>
            <person name="Hirao M."/>
            <person name="Ohmori Y."/>
            <person name="Kawabata A."/>
            <person name="Hikiji T."/>
            <person name="Kobatake N."/>
            <person name="Inagaki H."/>
            <person name="Ikema Y."/>
            <person name="Okamoto S."/>
            <person name="Okitani R."/>
            <person name="Kawakami T."/>
            <person name="Noguchi S."/>
            <person name="Itoh T."/>
            <person name="Shigeta K."/>
            <person name="Senba T."/>
            <person name="Matsumura K."/>
            <person name="Nakajima Y."/>
            <person name="Mizuno T."/>
            <person name="Morinaga M."/>
            <person name="Sasaki M."/>
            <person name="Togashi T."/>
            <person name="Oyama M."/>
            <person name="Hata H."/>
            <person name="Watanabe M."/>
            <person name="Komatsu T."/>
            <person name="Mizushima-Sugano J."/>
            <person name="Satoh T."/>
            <person name="Shirai Y."/>
            <person name="Takahashi Y."/>
            <person name="Nakagawa K."/>
            <person name="Okumura K."/>
            <person name="Nagase T."/>
            <person name="Nomura N."/>
            <person name="Kikuchi H."/>
            <person name="Masuho Y."/>
            <person name="Yamashita R."/>
            <person name="Nakai K."/>
            <person name="Yada T."/>
            <person name="Nakamura Y."/>
            <person name="Ohara O."/>
            <person name="Isogai T."/>
            <person name="Sugano S."/>
        </authorList>
    </citation>
    <scope>NUCLEOTIDE SEQUENCE [LARGE SCALE MRNA] (ISOFORMS 1 AND 3)</scope>
    <source>
        <tissue>Mammary gland</tissue>
        <tissue>Ovary</tissue>
    </source>
</reference>
<reference key="2">
    <citation type="journal article" date="2003" name="Nature">
        <title>The DNA sequence of human chromosome 7.</title>
        <authorList>
            <person name="Hillier L.W."/>
            <person name="Fulton R.S."/>
            <person name="Fulton L.A."/>
            <person name="Graves T.A."/>
            <person name="Pepin K.H."/>
            <person name="Wagner-McPherson C."/>
            <person name="Layman D."/>
            <person name="Maas J."/>
            <person name="Jaeger S."/>
            <person name="Walker R."/>
            <person name="Wylie K."/>
            <person name="Sekhon M."/>
            <person name="Becker M.C."/>
            <person name="O'Laughlin M.D."/>
            <person name="Schaller M.E."/>
            <person name="Fewell G.A."/>
            <person name="Delehaunty K.D."/>
            <person name="Miner T.L."/>
            <person name="Nash W.E."/>
            <person name="Cordes M."/>
            <person name="Du H."/>
            <person name="Sun H."/>
            <person name="Edwards J."/>
            <person name="Bradshaw-Cordum H."/>
            <person name="Ali J."/>
            <person name="Andrews S."/>
            <person name="Isak A."/>
            <person name="Vanbrunt A."/>
            <person name="Nguyen C."/>
            <person name="Du F."/>
            <person name="Lamar B."/>
            <person name="Courtney L."/>
            <person name="Kalicki J."/>
            <person name="Ozersky P."/>
            <person name="Bielicki L."/>
            <person name="Scott K."/>
            <person name="Holmes A."/>
            <person name="Harkins R."/>
            <person name="Harris A."/>
            <person name="Strong C.M."/>
            <person name="Hou S."/>
            <person name="Tomlinson C."/>
            <person name="Dauphin-Kohlberg S."/>
            <person name="Kozlowicz-Reilly A."/>
            <person name="Leonard S."/>
            <person name="Rohlfing T."/>
            <person name="Rock S.M."/>
            <person name="Tin-Wollam A.-M."/>
            <person name="Abbott A."/>
            <person name="Minx P."/>
            <person name="Maupin R."/>
            <person name="Strowmatt C."/>
            <person name="Latreille P."/>
            <person name="Miller N."/>
            <person name="Johnson D."/>
            <person name="Murray J."/>
            <person name="Woessner J.P."/>
            <person name="Wendl M.C."/>
            <person name="Yang S.-P."/>
            <person name="Schultz B.R."/>
            <person name="Wallis J.W."/>
            <person name="Spieth J."/>
            <person name="Bieri T.A."/>
            <person name="Nelson J.O."/>
            <person name="Berkowicz N."/>
            <person name="Wohldmann P.E."/>
            <person name="Cook L.L."/>
            <person name="Hickenbotham M.T."/>
            <person name="Eldred J."/>
            <person name="Williams D."/>
            <person name="Bedell J.A."/>
            <person name="Mardis E.R."/>
            <person name="Clifton S.W."/>
            <person name="Chissoe S.L."/>
            <person name="Marra M.A."/>
            <person name="Raymond C."/>
            <person name="Haugen E."/>
            <person name="Gillett W."/>
            <person name="Zhou Y."/>
            <person name="James R."/>
            <person name="Phelps K."/>
            <person name="Iadanoto S."/>
            <person name="Bubb K."/>
            <person name="Simms E."/>
            <person name="Levy R."/>
            <person name="Clendenning J."/>
            <person name="Kaul R."/>
            <person name="Kent W.J."/>
            <person name="Furey T.S."/>
            <person name="Baertsch R.A."/>
            <person name="Brent M.R."/>
            <person name="Keibler E."/>
            <person name="Flicek P."/>
            <person name="Bork P."/>
            <person name="Suyama M."/>
            <person name="Bailey J.A."/>
            <person name="Portnoy M.E."/>
            <person name="Torrents D."/>
            <person name="Chinwalla A.T."/>
            <person name="Gish W.R."/>
            <person name="Eddy S.R."/>
            <person name="McPherson J.D."/>
            <person name="Olson M.V."/>
            <person name="Eichler E.E."/>
            <person name="Green E.D."/>
            <person name="Waterston R.H."/>
            <person name="Wilson R.K."/>
        </authorList>
    </citation>
    <scope>NUCLEOTIDE SEQUENCE [LARGE SCALE GENOMIC DNA]</scope>
</reference>
<reference key="3">
    <citation type="submission" date="2005-07" db="EMBL/GenBank/DDBJ databases">
        <authorList>
            <person name="Mural R.J."/>
            <person name="Istrail S."/>
            <person name="Sutton G.G."/>
            <person name="Florea L."/>
            <person name="Halpern A.L."/>
            <person name="Mobarry C.M."/>
            <person name="Lippert R."/>
            <person name="Walenz B."/>
            <person name="Shatkay H."/>
            <person name="Dew I."/>
            <person name="Miller J.R."/>
            <person name="Flanigan M.J."/>
            <person name="Edwards N.J."/>
            <person name="Bolanos R."/>
            <person name="Fasulo D."/>
            <person name="Halldorsson B.V."/>
            <person name="Hannenhalli S."/>
            <person name="Turner R."/>
            <person name="Yooseph S."/>
            <person name="Lu F."/>
            <person name="Nusskern D.R."/>
            <person name="Shue B.C."/>
            <person name="Zheng X.H."/>
            <person name="Zhong F."/>
            <person name="Delcher A.L."/>
            <person name="Huson D.H."/>
            <person name="Kravitz S.A."/>
            <person name="Mouchard L."/>
            <person name="Reinert K."/>
            <person name="Remington K.A."/>
            <person name="Clark A.G."/>
            <person name="Waterman M.S."/>
            <person name="Eichler E.E."/>
            <person name="Adams M.D."/>
            <person name="Hunkapiller M.W."/>
            <person name="Myers E.W."/>
            <person name="Venter J.C."/>
        </authorList>
    </citation>
    <scope>NUCLEOTIDE SEQUENCE [LARGE SCALE GENOMIC DNA]</scope>
</reference>
<reference key="4">
    <citation type="journal article" date="2004" name="Genome Res.">
        <title>The status, quality, and expansion of the NIH full-length cDNA project: the Mammalian Gene Collection (MGC).</title>
        <authorList>
            <consortium name="The MGC Project Team"/>
        </authorList>
    </citation>
    <scope>NUCLEOTIDE SEQUENCE [LARGE SCALE MRNA] (ISOFORMS 1; 2 AND 3)</scope>
    <source>
        <tissue>Brain</tissue>
        <tissue>Lung</tissue>
    </source>
</reference>
<reference key="5">
    <citation type="journal article" date="2007" name="BMC Genomics">
        <title>The full-ORF clone resource of the German cDNA consortium.</title>
        <authorList>
            <person name="Bechtel S."/>
            <person name="Rosenfelder H."/>
            <person name="Duda A."/>
            <person name="Schmidt C.P."/>
            <person name="Ernst U."/>
            <person name="Wellenreuther R."/>
            <person name="Mehrle A."/>
            <person name="Schuster C."/>
            <person name="Bahr A."/>
            <person name="Bloecker H."/>
            <person name="Heubner D."/>
            <person name="Hoerlein A."/>
            <person name="Michel G."/>
            <person name="Wedler H."/>
            <person name="Koehrer K."/>
            <person name="Ottenwaelder B."/>
            <person name="Poustka A."/>
            <person name="Wiemann S."/>
            <person name="Schupp I."/>
        </authorList>
    </citation>
    <scope>NUCLEOTIDE SEQUENCE [LARGE SCALE MRNA] OF 93-185 (ISOFORMS 1/2/3)</scope>
    <source>
        <tissue>Amygdala</tissue>
    </source>
</reference>
<reference key="6">
    <citation type="journal article" date="2013" name="J. Proteome Res.">
        <title>Toward a comprehensive characterization of a human cancer cell phosphoproteome.</title>
        <authorList>
            <person name="Zhou H."/>
            <person name="Di Palma S."/>
            <person name="Preisinger C."/>
            <person name="Peng M."/>
            <person name="Polat A.N."/>
            <person name="Heck A.J."/>
            <person name="Mohammed S."/>
        </authorList>
    </citation>
    <scope>PHOSPHORYLATION [LARGE SCALE ANALYSIS] AT SER-137</scope>
    <scope>IDENTIFICATION BY MASS SPECTROMETRY [LARGE SCALE ANALYSIS]</scope>
    <source>
        <tissue>Cervix carcinoma</tissue>
        <tissue>Erythroleukemia</tissue>
    </source>
</reference>
<proteinExistence type="evidence at protein level"/>
<gene>
    <name type="primary">IFT22</name>
    <name type="synonym">RABL5</name>
</gene>
<evidence type="ECO:0000250" key="1"/>
<evidence type="ECO:0000250" key="2">
    <source>
        <dbReference type="UniProtKB" id="Q9DAI2"/>
    </source>
</evidence>
<evidence type="ECO:0000303" key="3">
    <source>
    </source>
</evidence>
<evidence type="ECO:0000303" key="4">
    <source>
    </source>
</evidence>
<evidence type="ECO:0000305" key="5"/>
<evidence type="ECO:0007744" key="6">
    <source>
    </source>
</evidence>
<comment type="function">
    <text evidence="1">Small GTPase-like component of the intraflagellar transport (IFT) complex B.</text>
</comment>
<comment type="subunit">
    <text evidence="1 2">Component of the IFT complex B, at least composed of IFT20, IFT22, IFT25, IFT27, IFT46, IFT52, TRAF3IP1/IFT54, IFT57, IFT74, IFT80, IFT81, and IFT88. Interacts with IFT88 (By similarity). Interacts with CFAP61 (By similarity).</text>
</comment>
<comment type="subcellular location">
    <subcellularLocation>
        <location evidence="1">Cell projection</location>
        <location evidence="1">Cilium</location>
    </subcellularLocation>
</comment>
<comment type="alternative products">
    <event type="alternative splicing"/>
    <isoform>
        <id>Q9H7X7-1</id>
        <name>1</name>
        <sequence type="displayed"/>
    </isoform>
    <isoform>
        <id>Q9H7X7-2</id>
        <name>2</name>
        <sequence type="described" ref="VSP_021112"/>
    </isoform>
    <isoform>
        <id>Q9H7X7-3</id>
        <name>3</name>
        <sequence type="described" ref="VSP_045182"/>
    </isoform>
</comment>
<comment type="similarity">
    <text evidence="5">Belongs to the small GTPase superfamily. Rab family.</text>
</comment>
<protein>
    <recommendedName>
        <fullName>Intraflagellar transport protein 22 homolog</fullName>
    </recommendedName>
    <alternativeName>
        <fullName>Rab-like protein 5</fullName>
    </alternativeName>
</protein>
<organism>
    <name type="scientific">Homo sapiens</name>
    <name type="common">Human</name>
    <dbReference type="NCBI Taxonomy" id="9606"/>
    <lineage>
        <taxon>Eukaryota</taxon>
        <taxon>Metazoa</taxon>
        <taxon>Chordata</taxon>
        <taxon>Craniata</taxon>
        <taxon>Vertebrata</taxon>
        <taxon>Euteleostomi</taxon>
        <taxon>Mammalia</taxon>
        <taxon>Eutheria</taxon>
        <taxon>Euarchontoglires</taxon>
        <taxon>Primates</taxon>
        <taxon>Haplorrhini</taxon>
        <taxon>Catarrhini</taxon>
        <taxon>Hominidae</taxon>
        <taxon>Homo</taxon>
    </lineage>
</organism>
<name>IFT22_HUMAN</name>
<sequence length="185" mass="20835">MLKAKILFVGPCESGKTVLANFLTESSDITEYSPTQGVRILEFENPHVTSNNKGTGCEFELWDCGGDAKFESCWPALMKDAHGVVIVFNADIPSHRKEMEMWYSCFVQQPSLQDTQCMLIAHHKPGSGDDKGSLSLSPPLNKLKLVHSNLEDDPEEIRMEFIKYLKSIINSMSESRDREEMSIMT</sequence>
<keyword id="KW-0025">Alternative splicing</keyword>
<keyword id="KW-0966">Cell projection</keyword>
<keyword id="KW-0969">Cilium</keyword>
<keyword id="KW-0342">GTP-binding</keyword>
<keyword id="KW-0547">Nucleotide-binding</keyword>
<keyword id="KW-0597">Phosphoprotein</keyword>
<keyword id="KW-1267">Proteomics identification</keyword>
<keyword id="KW-1185">Reference proteome</keyword>
<feature type="chain" id="PRO_0000253733" description="Intraflagellar transport protein 22 homolog">
    <location>
        <begin position="1"/>
        <end position="185"/>
    </location>
</feature>
<feature type="binding site" evidence="1">
    <location>
        <begin position="10"/>
        <end position="17"/>
    </location>
    <ligand>
        <name>GTP</name>
        <dbReference type="ChEBI" id="CHEBI:37565"/>
    </ligand>
</feature>
<feature type="binding site" evidence="1">
    <location>
        <begin position="63"/>
        <end position="67"/>
    </location>
    <ligand>
        <name>GTP</name>
        <dbReference type="ChEBI" id="CHEBI:37565"/>
    </ligand>
</feature>
<feature type="binding site" evidence="1">
    <location>
        <begin position="123"/>
        <end position="126"/>
    </location>
    <ligand>
        <name>GTP</name>
        <dbReference type="ChEBI" id="CHEBI:37565"/>
    </ligand>
</feature>
<feature type="modified residue" description="Phosphoserine" evidence="6">
    <location>
        <position position="137"/>
    </location>
</feature>
<feature type="splice variant" id="VSP_045182" description="In isoform 3." evidence="3 4">
    <location>
        <begin position="1"/>
        <end position="77"/>
    </location>
</feature>
<feature type="splice variant" id="VSP_021112" description="In isoform 2." evidence="4">
    <location>
        <begin position="40"/>
        <end position="69"/>
    </location>
</feature>